<proteinExistence type="inferred from homology"/>
<name>TOS6_DEBHA</name>
<dbReference type="EMBL" id="CR382139">
    <property type="protein sequence ID" value="CAG90356.1"/>
    <property type="molecule type" value="Genomic_DNA"/>
</dbReference>
<dbReference type="RefSeq" id="XP_461893.1">
    <property type="nucleotide sequence ID" value="XM_461893.1"/>
</dbReference>
<dbReference type="GlyCosmos" id="Q6BIS8">
    <property type="glycosylation" value="1 site, No reported glycans"/>
</dbReference>
<dbReference type="GeneID" id="2904774"/>
<dbReference type="KEGG" id="dha:DEHA2G07942g"/>
<dbReference type="VEuPathDB" id="FungiDB:DEHA2G07942g"/>
<dbReference type="eggNOG" id="ENOG502SY3N">
    <property type="taxonomic scope" value="Eukaryota"/>
</dbReference>
<dbReference type="HOGENOM" id="CLU_185438_0_0_1"/>
<dbReference type="InParanoid" id="Q6BIS8"/>
<dbReference type="OMA" id="NHTSVAN"/>
<dbReference type="Proteomes" id="UP000000599">
    <property type="component" value="Chromosome G"/>
</dbReference>
<dbReference type="GO" id="GO:0005576">
    <property type="term" value="C:extracellular region"/>
    <property type="evidence" value="ECO:0007669"/>
    <property type="project" value="UniProtKB-KW"/>
</dbReference>
<dbReference type="GO" id="GO:0098552">
    <property type="term" value="C:side of membrane"/>
    <property type="evidence" value="ECO:0007669"/>
    <property type="project" value="UniProtKB-KW"/>
</dbReference>
<sequence length="97" mass="9445">MQFSTVALFAVAAAFVSADVVTEVDTQSTLVTITDCDSTVTDCPARQTEAPVSSAPVSSSAAANTTVAGVSTYEGAAAKGQYAAGVAALAAGALLAL</sequence>
<evidence type="ECO:0000250" key="1"/>
<evidence type="ECO:0000255" key="2"/>
<evidence type="ECO:0000305" key="3"/>
<reference key="1">
    <citation type="journal article" date="2004" name="Nature">
        <title>Genome evolution in yeasts.</title>
        <authorList>
            <person name="Dujon B."/>
            <person name="Sherman D."/>
            <person name="Fischer G."/>
            <person name="Durrens P."/>
            <person name="Casaregola S."/>
            <person name="Lafontaine I."/>
            <person name="de Montigny J."/>
            <person name="Marck C."/>
            <person name="Neuveglise C."/>
            <person name="Talla E."/>
            <person name="Goffard N."/>
            <person name="Frangeul L."/>
            <person name="Aigle M."/>
            <person name="Anthouard V."/>
            <person name="Babour A."/>
            <person name="Barbe V."/>
            <person name="Barnay S."/>
            <person name="Blanchin S."/>
            <person name="Beckerich J.-M."/>
            <person name="Beyne E."/>
            <person name="Bleykasten C."/>
            <person name="Boisrame A."/>
            <person name="Boyer J."/>
            <person name="Cattolico L."/>
            <person name="Confanioleri F."/>
            <person name="de Daruvar A."/>
            <person name="Despons L."/>
            <person name="Fabre E."/>
            <person name="Fairhead C."/>
            <person name="Ferry-Dumazet H."/>
            <person name="Groppi A."/>
            <person name="Hantraye F."/>
            <person name="Hennequin C."/>
            <person name="Jauniaux N."/>
            <person name="Joyet P."/>
            <person name="Kachouri R."/>
            <person name="Kerrest A."/>
            <person name="Koszul R."/>
            <person name="Lemaire M."/>
            <person name="Lesur I."/>
            <person name="Ma L."/>
            <person name="Muller H."/>
            <person name="Nicaud J.-M."/>
            <person name="Nikolski M."/>
            <person name="Oztas S."/>
            <person name="Ozier-Kalogeropoulos O."/>
            <person name="Pellenz S."/>
            <person name="Potier S."/>
            <person name="Richard G.-F."/>
            <person name="Straub M.-L."/>
            <person name="Suleau A."/>
            <person name="Swennen D."/>
            <person name="Tekaia F."/>
            <person name="Wesolowski-Louvel M."/>
            <person name="Westhof E."/>
            <person name="Wirth B."/>
            <person name="Zeniou-Meyer M."/>
            <person name="Zivanovic Y."/>
            <person name="Bolotin-Fukuhara M."/>
            <person name="Thierry A."/>
            <person name="Bouchier C."/>
            <person name="Caudron B."/>
            <person name="Scarpelli C."/>
            <person name="Gaillardin C."/>
            <person name="Weissenbach J."/>
            <person name="Wincker P."/>
            <person name="Souciet J.-L."/>
        </authorList>
    </citation>
    <scope>NUCLEOTIDE SEQUENCE [LARGE SCALE GENOMIC DNA]</scope>
    <source>
        <strain>ATCC 36239 / CBS 767 / BCRC 21394 / JCM 1990 / NBRC 0083 / IGC 2968</strain>
    </source>
</reference>
<accession>Q6BIS8</accession>
<comment type="subcellular location">
    <subcellularLocation>
        <location evidence="3">Secreted</location>
        <location evidence="3">Cell wall</location>
    </subcellularLocation>
    <subcellularLocation>
        <location evidence="3">Membrane</location>
        <topology evidence="3">Lipid-anchor</topology>
        <topology evidence="3">GPI-anchor</topology>
    </subcellularLocation>
</comment>
<comment type="PTM">
    <text evidence="1">The GPI-anchor is attached to the protein in the endoplasmic reticulum and serves to target the protein to the cell surface. There, the glucosamine-inositol phospholipid moiety is cleaved off and the GPI-modified mannoprotein is covalently attached via its lipidless GPI glycan remnant to the 1,6-beta-glucan of the outer cell wall layer (By similarity).</text>
</comment>
<comment type="similarity">
    <text evidence="3">Belongs to the TOS6 family.</text>
</comment>
<keyword id="KW-0134">Cell wall</keyword>
<keyword id="KW-0325">Glycoprotein</keyword>
<keyword id="KW-0336">GPI-anchor</keyword>
<keyword id="KW-0449">Lipoprotein</keyword>
<keyword id="KW-0472">Membrane</keyword>
<keyword id="KW-1185">Reference proteome</keyword>
<keyword id="KW-0964">Secreted</keyword>
<keyword id="KW-0732">Signal</keyword>
<protein>
    <recommendedName>
        <fullName>Protein TOS6</fullName>
    </recommendedName>
</protein>
<organism>
    <name type="scientific">Debaryomyces hansenii (strain ATCC 36239 / CBS 767 / BCRC 21394 / JCM 1990 / NBRC 0083 / IGC 2968)</name>
    <name type="common">Yeast</name>
    <name type="synonym">Torulaspora hansenii</name>
    <dbReference type="NCBI Taxonomy" id="284592"/>
    <lineage>
        <taxon>Eukaryota</taxon>
        <taxon>Fungi</taxon>
        <taxon>Dikarya</taxon>
        <taxon>Ascomycota</taxon>
        <taxon>Saccharomycotina</taxon>
        <taxon>Pichiomycetes</taxon>
        <taxon>Debaryomycetaceae</taxon>
        <taxon>Debaryomyces</taxon>
    </lineage>
</organism>
<feature type="signal peptide" evidence="2">
    <location>
        <begin position="1"/>
        <end position="18"/>
    </location>
</feature>
<feature type="chain" id="PRO_0000402230" description="Protein TOS6">
    <location>
        <begin position="19"/>
        <end position="75"/>
    </location>
</feature>
<feature type="propeptide" id="PRO_0000402231" description="Removed in mature form" evidence="2">
    <location>
        <begin position="76"/>
        <end position="97"/>
    </location>
</feature>
<feature type="lipid moiety-binding region" description="GPI-anchor amidated glycine" evidence="2">
    <location>
        <position position="75"/>
    </location>
</feature>
<feature type="glycosylation site" description="N-linked (GlcNAc...) asparagine" evidence="2">
    <location>
        <position position="64"/>
    </location>
</feature>
<gene>
    <name type="primary">TOS6</name>
    <name type="ordered locus">DEHA2G07942g</name>
</gene>